<evidence type="ECO:0000250" key="1">
    <source>
        <dbReference type="UniProtKB" id="Q8N0X4"/>
    </source>
</evidence>
<evidence type="ECO:0000250" key="2">
    <source>
        <dbReference type="UniProtKB" id="Q8R4N0"/>
    </source>
</evidence>
<evidence type="ECO:0000250" key="3">
    <source>
        <dbReference type="UniProtKB" id="Q9RUZ0"/>
    </source>
</evidence>
<evidence type="ECO:0000255" key="4"/>
<evidence type="ECO:0000303" key="5">
    <source ref="1"/>
</evidence>
<evidence type="ECO:0000305" key="6"/>
<gene>
    <name type="primary">Clybl</name>
</gene>
<dbReference type="EC" id="4.1.3.25" evidence="1"/>
<dbReference type="EC" id="3.1.2.30" evidence="1"/>
<dbReference type="EC" id="2.3.3.-" evidence="1"/>
<dbReference type="EC" id="2.3.3.9" evidence="1"/>
<dbReference type="EMBL" id="BF567092">
    <property type="status" value="NOT_ANNOTATED_CDS"/>
    <property type="molecule type" value="mRNA"/>
</dbReference>
<dbReference type="EMBL" id="BC088243">
    <property type="protein sequence ID" value="AAH88243.1"/>
    <property type="molecule type" value="mRNA"/>
</dbReference>
<dbReference type="RefSeq" id="NP_001094155.1">
    <molecule id="Q5I0K3-1"/>
    <property type="nucleotide sequence ID" value="NM_001100685.1"/>
</dbReference>
<dbReference type="RefSeq" id="XP_063130431.1">
    <molecule id="Q5I0K3-2"/>
    <property type="nucleotide sequence ID" value="XM_063274361.1"/>
</dbReference>
<dbReference type="SMR" id="Q5I0K3"/>
<dbReference type="FunCoup" id="Q5I0K3">
    <property type="interactions" value="930"/>
</dbReference>
<dbReference type="STRING" id="10116.ENSRNOP00000018918"/>
<dbReference type="GlyGen" id="Q5I0K3">
    <property type="glycosylation" value="1 site"/>
</dbReference>
<dbReference type="iPTMnet" id="Q5I0K3"/>
<dbReference type="PhosphoSitePlus" id="Q5I0K3"/>
<dbReference type="PaxDb" id="10116-ENSRNOP00000018918"/>
<dbReference type="Ensembl" id="ENSRNOT00000018918.8">
    <molecule id="Q5I0K3-1"/>
    <property type="protein sequence ID" value="ENSRNOP00000018918.5"/>
    <property type="gene ID" value="ENSRNOG00000014075.9"/>
</dbReference>
<dbReference type="GeneID" id="306198"/>
<dbReference type="KEGG" id="rno:306198"/>
<dbReference type="AGR" id="RGD:1304615"/>
<dbReference type="CTD" id="171425"/>
<dbReference type="RGD" id="1304615">
    <property type="gene designation" value="Clybl"/>
</dbReference>
<dbReference type="eggNOG" id="ENOG502QQPK">
    <property type="taxonomic scope" value="Eukaryota"/>
</dbReference>
<dbReference type="GeneTree" id="ENSGT00390000017163"/>
<dbReference type="HOGENOM" id="CLU_044864_1_0_1"/>
<dbReference type="InParanoid" id="Q5I0K3"/>
<dbReference type="PhylomeDB" id="Q5I0K3"/>
<dbReference type="TreeFam" id="TF313596"/>
<dbReference type="ChiTaRS" id="Clybl">
    <property type="organism name" value="rat"/>
</dbReference>
<dbReference type="PRO" id="PR:Q5I0K3"/>
<dbReference type="Proteomes" id="UP000002494">
    <property type="component" value="Chromosome 15"/>
</dbReference>
<dbReference type="Bgee" id="ENSRNOG00000014075">
    <property type="expression patterns" value="Expressed in heart and 20 other cell types or tissues"/>
</dbReference>
<dbReference type="GO" id="GO:0005739">
    <property type="term" value="C:mitochondrion"/>
    <property type="evidence" value="ECO:0007669"/>
    <property type="project" value="UniProtKB-SubCell"/>
</dbReference>
<dbReference type="GO" id="GO:0047777">
    <property type="term" value="F:(S)-citramalyl-CoA lyase activity"/>
    <property type="evidence" value="ECO:0000250"/>
    <property type="project" value="UniProtKB"/>
</dbReference>
<dbReference type="GO" id="GO:0016787">
    <property type="term" value="F:hydrolase activity"/>
    <property type="evidence" value="ECO:0007669"/>
    <property type="project" value="UniProtKB-KW"/>
</dbReference>
<dbReference type="GO" id="GO:0000287">
    <property type="term" value="F:magnesium ion binding"/>
    <property type="evidence" value="ECO:0000250"/>
    <property type="project" value="UniProtKB"/>
</dbReference>
<dbReference type="GO" id="GO:0004474">
    <property type="term" value="F:malate synthase activity"/>
    <property type="evidence" value="ECO:0000250"/>
    <property type="project" value="UniProtKB"/>
</dbReference>
<dbReference type="GO" id="GO:0106121">
    <property type="term" value="P:positive regulation of cobalamin metabolic process"/>
    <property type="evidence" value="ECO:0000266"/>
    <property type="project" value="RGD"/>
</dbReference>
<dbReference type="GO" id="GO:0070207">
    <property type="term" value="P:protein homotrimerization"/>
    <property type="evidence" value="ECO:0000250"/>
    <property type="project" value="UniProtKB"/>
</dbReference>
<dbReference type="GO" id="GO:0106064">
    <property type="term" value="P:regulation of cobalamin metabolic process"/>
    <property type="evidence" value="ECO:0000250"/>
    <property type="project" value="UniProtKB"/>
</dbReference>
<dbReference type="FunFam" id="3.20.20.60:FF:000014">
    <property type="entry name" value="Citrate lyase subunit beta-like protein"/>
    <property type="match status" value="1"/>
</dbReference>
<dbReference type="Gene3D" id="3.20.20.60">
    <property type="entry name" value="Phosphoenolpyruvate-binding domains"/>
    <property type="match status" value="1"/>
</dbReference>
<dbReference type="InterPro" id="IPR005000">
    <property type="entry name" value="Aldolase/citrate-lyase_domain"/>
</dbReference>
<dbReference type="InterPro" id="IPR040186">
    <property type="entry name" value="Citramalyl-CoA_lyase"/>
</dbReference>
<dbReference type="InterPro" id="IPR011206">
    <property type="entry name" value="Citrate_lyase_beta/mcl1/mcl2"/>
</dbReference>
<dbReference type="InterPro" id="IPR015813">
    <property type="entry name" value="Pyrv/PenolPyrv_kinase-like_dom"/>
</dbReference>
<dbReference type="InterPro" id="IPR040442">
    <property type="entry name" value="Pyrv_kinase-like_dom_sf"/>
</dbReference>
<dbReference type="PANTHER" id="PTHR11105:SF0">
    <property type="entry name" value="CITRAMALYL-COA LYASE, MITOCHONDRIAL"/>
    <property type="match status" value="1"/>
</dbReference>
<dbReference type="PANTHER" id="PTHR11105">
    <property type="entry name" value="CITRATE LYASE SUBUNIT BETA-RELATED"/>
    <property type="match status" value="1"/>
</dbReference>
<dbReference type="Pfam" id="PF03328">
    <property type="entry name" value="HpcH_HpaI"/>
    <property type="match status" value="1"/>
</dbReference>
<dbReference type="PIRSF" id="PIRSF015582">
    <property type="entry name" value="Cit_lyase_B"/>
    <property type="match status" value="1"/>
</dbReference>
<dbReference type="SUPFAM" id="SSF51621">
    <property type="entry name" value="Phosphoenolpyruvate/pyruvate domain"/>
    <property type="match status" value="1"/>
</dbReference>
<keyword id="KW-0007">Acetylation</keyword>
<keyword id="KW-0025">Alternative splicing</keyword>
<keyword id="KW-0378">Hydrolase</keyword>
<keyword id="KW-0456">Lyase</keyword>
<keyword id="KW-0460">Magnesium</keyword>
<keyword id="KW-0479">Metal-binding</keyword>
<keyword id="KW-0496">Mitochondrion</keyword>
<keyword id="KW-1185">Reference proteome</keyword>
<keyword id="KW-0808">Transferase</keyword>
<keyword id="KW-0809">Transit peptide</keyword>
<sequence>MALCVLQNAVRGAAALPRLKASLVASVCRPGYSSLSNHKYVPRRAVLYVPGNDEKKIRKIPSLKVDCAVLDCEDGVAENKKNEARLRIAKTLEDFDLGTTEKCVRINSVSSGLAEADLETFLQARVLPSSLMLPKVEGPEEIQWFSDKFSLHLKGRKLEQPMNLIPFVETAMGLLNFKAVCEETLKIGPQVGLFLDAVVFGGEDFRASIGATSNKDTQDILYARQKIVVTAKAFGLQAIDLVYIDFRDEDGLLRQSREAAAMGFTGKQVIHPNQIAVVQEQFTPTPEKIRWAEELIAAFKEHQQLGKGAFTFQGSMIDMPLLKQAQNIVTLATSIKEK</sequence>
<proteinExistence type="evidence at transcript level"/>
<name>CLYBL_RAT</name>
<organism>
    <name type="scientific">Rattus norvegicus</name>
    <name type="common">Rat</name>
    <dbReference type="NCBI Taxonomy" id="10116"/>
    <lineage>
        <taxon>Eukaryota</taxon>
        <taxon>Metazoa</taxon>
        <taxon>Chordata</taxon>
        <taxon>Craniata</taxon>
        <taxon>Vertebrata</taxon>
        <taxon>Euteleostomi</taxon>
        <taxon>Mammalia</taxon>
        <taxon>Eutheria</taxon>
        <taxon>Euarchontoglires</taxon>
        <taxon>Glires</taxon>
        <taxon>Rodentia</taxon>
        <taxon>Myomorpha</taxon>
        <taxon>Muroidea</taxon>
        <taxon>Muridae</taxon>
        <taxon>Murinae</taxon>
        <taxon>Rattus</taxon>
    </lineage>
</organism>
<comment type="function">
    <text evidence="1">Mitochondrial citramalyl-CoA lyase indirectly involved in the vitamin B12 metabolism. Converts citramalyl-CoA into acetyl-CoA and pyruvate in the C5-dicarboxylate catabolism pathway. The C5-dicarboxylate catabolism pathway is required to detoxify itaconate, a vitamin B12-poisoning metabolite. Also acts as a malate synthase in vitro, converting glyoxylate and acetyl-CoA to malate. Also displays malyl-CoA thioesterase activity. Also acts as a beta-methylmalate synthase in vitro, by mediating conversion of glyoxylate and propionyl-CoA to beta-methylmalate. Also has very weak citramalate synthase activity in vitro.</text>
</comment>
<comment type="catalytic activity">
    <reaction evidence="1">
        <text>glyoxylate + acetyl-CoA + H2O = (S)-malate + CoA + H(+)</text>
        <dbReference type="Rhea" id="RHEA:18181"/>
        <dbReference type="ChEBI" id="CHEBI:15377"/>
        <dbReference type="ChEBI" id="CHEBI:15378"/>
        <dbReference type="ChEBI" id="CHEBI:15589"/>
        <dbReference type="ChEBI" id="CHEBI:36655"/>
        <dbReference type="ChEBI" id="CHEBI:57287"/>
        <dbReference type="ChEBI" id="CHEBI:57288"/>
        <dbReference type="EC" id="2.3.3.9"/>
    </reaction>
</comment>
<comment type="catalytic activity">
    <reaction evidence="1">
        <text>propanoyl-CoA + glyoxylate + H2O = 3-methylmalate + CoA + H(+)</text>
        <dbReference type="Rhea" id="RHEA:47628"/>
        <dbReference type="ChEBI" id="CHEBI:15377"/>
        <dbReference type="ChEBI" id="CHEBI:15378"/>
        <dbReference type="ChEBI" id="CHEBI:36655"/>
        <dbReference type="ChEBI" id="CHEBI:57287"/>
        <dbReference type="ChEBI" id="CHEBI:57392"/>
        <dbReference type="ChEBI" id="CHEBI:87810"/>
    </reaction>
</comment>
<comment type="catalytic activity">
    <reaction evidence="1">
        <text>(3S)-citramalyl-CoA = pyruvate + acetyl-CoA</text>
        <dbReference type="Rhea" id="RHEA:22612"/>
        <dbReference type="ChEBI" id="CHEBI:15361"/>
        <dbReference type="ChEBI" id="CHEBI:57288"/>
        <dbReference type="ChEBI" id="CHEBI:58668"/>
        <dbReference type="EC" id="4.1.3.25"/>
    </reaction>
</comment>
<comment type="catalytic activity">
    <reaction evidence="1">
        <text>(S)-malyl-CoA + H2O = (S)-malate + CoA + H(+)</text>
        <dbReference type="Rhea" id="RHEA:38291"/>
        <dbReference type="ChEBI" id="CHEBI:15377"/>
        <dbReference type="ChEBI" id="CHEBI:15378"/>
        <dbReference type="ChEBI" id="CHEBI:15589"/>
        <dbReference type="ChEBI" id="CHEBI:57287"/>
        <dbReference type="ChEBI" id="CHEBI:57317"/>
        <dbReference type="EC" id="3.1.2.30"/>
    </reaction>
</comment>
<comment type="cofactor">
    <cofactor evidence="1">
        <name>Mg(2+)</name>
        <dbReference type="ChEBI" id="CHEBI:18420"/>
    </cofactor>
    <text evidence="3">Binds 1 Mg(2+) ion per subunit.</text>
</comment>
<comment type="subunit">
    <text evidence="1">Homotrimer.</text>
</comment>
<comment type="subcellular location">
    <subcellularLocation>
        <location evidence="2">Mitochondrion</location>
    </subcellularLocation>
</comment>
<comment type="alternative products">
    <event type="alternative splicing"/>
    <isoform>
        <id>Q5I0K3-1</id>
        <name>1</name>
        <sequence type="displayed"/>
    </isoform>
    <isoform>
        <id>Q5I0K3-2</id>
        <name>2</name>
        <sequence type="described" ref="VSP_025044"/>
    </isoform>
</comment>
<comment type="similarity">
    <text evidence="6">Belongs to the HpcH/HpaI aldolase family. Citrate lyase beta subunit-like subfamily.</text>
</comment>
<comment type="caution">
    <text evidence="6">This organism lacks the other subunits that are necessary for ATP-independent citrate lyase activity. Even though this protein has clear similarity to citrate lyase beta subunit, it is expected to have a somewhat different enzyme activity.</text>
</comment>
<feature type="transit peptide" description="Mitochondrion" evidence="4">
    <location>
        <begin position="1"/>
        <end position="20"/>
    </location>
</feature>
<feature type="chain" id="PRO_0000286391" description="Citramalyl-CoA lyase, mitochondrial">
    <location>
        <begin position="21"/>
        <end position="338"/>
    </location>
</feature>
<feature type="active site" evidence="1">
    <location>
        <position position="318"/>
    </location>
</feature>
<feature type="binding site" evidence="1">
    <location>
        <position position="48"/>
    </location>
    <ligand>
        <name>substrate</name>
    </ligand>
</feature>
<feature type="binding site" evidence="1">
    <location>
        <position position="55"/>
    </location>
    <ligand>
        <name>substrate</name>
    </ligand>
</feature>
<feature type="binding site" evidence="1">
    <location>
        <position position="59"/>
    </location>
    <ligand>
        <name>substrate</name>
    </ligand>
</feature>
<feature type="binding site" evidence="1">
    <location>
        <position position="105"/>
    </location>
    <ligand>
        <name>substrate</name>
    </ligand>
</feature>
<feature type="binding site" evidence="1">
    <location>
        <position position="169"/>
    </location>
    <ligand>
        <name>Mg(2+)</name>
        <dbReference type="ChEBI" id="CHEBI:18420"/>
    </ligand>
</feature>
<feature type="binding site" evidence="1">
    <location>
        <position position="204"/>
    </location>
    <ligand>
        <name>Mg(2+)</name>
        <dbReference type="ChEBI" id="CHEBI:18420"/>
    </ligand>
</feature>
<feature type="binding site" evidence="1">
    <location>
        <begin position="270"/>
        <end position="271"/>
    </location>
    <ligand>
        <name>substrate</name>
    </ligand>
</feature>
<feature type="modified residue" description="N6-acetyllysine" evidence="2">
    <location>
        <position position="55"/>
    </location>
</feature>
<feature type="modified residue" description="N6-acetyllysine" evidence="2">
    <location>
        <position position="59"/>
    </location>
</feature>
<feature type="modified residue" description="N6-acetyllysine" evidence="2">
    <location>
        <position position="64"/>
    </location>
</feature>
<feature type="modified residue" description="N6-acetyllysine; alternate" evidence="2">
    <location>
        <position position="80"/>
    </location>
</feature>
<feature type="modified residue" description="N6-succinyllysine; alternate" evidence="2">
    <location>
        <position position="80"/>
    </location>
</feature>
<feature type="modified residue" description="N6-acetyllysine; alternate" evidence="2">
    <location>
        <position position="90"/>
    </location>
</feature>
<feature type="modified residue" description="N6-succinyllysine; alternate" evidence="2">
    <location>
        <position position="90"/>
    </location>
</feature>
<feature type="modified residue" description="N6-succinyllysine" evidence="2">
    <location>
        <position position="307"/>
    </location>
</feature>
<feature type="splice variant" id="VSP_025044" description="In isoform 2." evidence="5">
    <location>
        <begin position="82"/>
        <end position="144"/>
    </location>
</feature>
<reference key="1">
    <citation type="submission" date="2006-01" db="EMBL/GenBank/DDBJ databases">
        <authorList>
            <person name="Bonaldo M.F."/>
            <person name="Lennon G."/>
            <person name="Soares M.B."/>
        </authorList>
    </citation>
    <scope>NUCLEOTIDE SEQUENCE [LARGE SCALE MRNA] OF 1-205 (ISOFORM 2)</scope>
</reference>
<reference key="2">
    <citation type="journal article" date="2004" name="Genome Res.">
        <title>The status, quality, and expansion of the NIH full-length cDNA project: the Mammalian Gene Collection (MGC).</title>
        <authorList>
            <consortium name="The MGC Project Team"/>
        </authorList>
    </citation>
    <scope>NUCLEOTIDE SEQUENCE [LARGE SCALE MRNA] OF 2-338 (ISOFORM 1)</scope>
    <source>
        <tissue>Spleen</tissue>
    </source>
</reference>
<accession>Q5I0K3</accession>
<protein>
    <recommendedName>
        <fullName evidence="1">Citramalyl-CoA lyase, mitochondrial</fullName>
        <ecNumber evidence="1">4.1.3.25</ecNumber>
    </recommendedName>
    <alternativeName>
        <fullName evidence="1">(3S)-malyl-CoA thioesterase</fullName>
        <ecNumber evidence="1">3.1.2.30</ecNumber>
    </alternativeName>
    <alternativeName>
        <fullName>Beta-methylmalate synthase</fullName>
        <ecNumber evidence="1">2.3.3.-</ecNumber>
    </alternativeName>
    <alternativeName>
        <fullName>Citrate lyase subunit beta-like protein, mitochondrial</fullName>
        <shortName>Citrate lyase beta-like</shortName>
    </alternativeName>
    <alternativeName>
        <fullName>Malate synthase</fullName>
        <ecNumber evidence="1">2.3.3.9</ecNumber>
    </alternativeName>
</protein>